<proteinExistence type="inferred from homology"/>
<reference key="1">
    <citation type="journal article" date="1999" name="Nature">
        <title>Genomic sequence comparison of two unrelated isolates of the human gastric pathogen Helicobacter pylori.</title>
        <authorList>
            <person name="Alm R.A."/>
            <person name="Ling L.-S.L."/>
            <person name="Moir D.T."/>
            <person name="King B.L."/>
            <person name="Brown E.D."/>
            <person name="Doig P.C."/>
            <person name="Smith D.R."/>
            <person name="Noonan B."/>
            <person name="Guild B.C."/>
            <person name="deJonge B.L."/>
            <person name="Carmel G."/>
            <person name="Tummino P.J."/>
            <person name="Caruso A."/>
            <person name="Uria-Nickelsen M."/>
            <person name="Mills D.M."/>
            <person name="Ives C."/>
            <person name="Gibson R."/>
            <person name="Merberg D."/>
            <person name="Mills S.D."/>
            <person name="Jiang Q."/>
            <person name="Taylor D.E."/>
            <person name="Vovis G.F."/>
            <person name="Trust T.J."/>
        </authorList>
    </citation>
    <scope>NUCLEOTIDE SEQUENCE [LARGE SCALE GENOMIC DNA]</scope>
    <source>
        <strain>J99 / ATCC 700824</strain>
    </source>
</reference>
<feature type="chain" id="PRO_0000126420" description="Small ribosomal subunit protein uS8">
    <location>
        <begin position="1"/>
        <end position="131"/>
    </location>
</feature>
<protein>
    <recommendedName>
        <fullName evidence="1">Small ribosomal subunit protein uS8</fullName>
    </recommendedName>
    <alternativeName>
        <fullName evidence="2">30S ribosomal protein S8</fullName>
    </alternativeName>
</protein>
<name>RS8_HELPJ</name>
<accession>P66622</accession>
<accession>P56015</accession>
<organism>
    <name type="scientific">Helicobacter pylori (strain J99 / ATCC 700824)</name>
    <name type="common">Campylobacter pylori J99</name>
    <dbReference type="NCBI Taxonomy" id="85963"/>
    <lineage>
        <taxon>Bacteria</taxon>
        <taxon>Pseudomonadati</taxon>
        <taxon>Campylobacterota</taxon>
        <taxon>Epsilonproteobacteria</taxon>
        <taxon>Campylobacterales</taxon>
        <taxon>Helicobacteraceae</taxon>
        <taxon>Helicobacter</taxon>
    </lineage>
</organism>
<comment type="function">
    <text evidence="1">One of the primary rRNA binding proteins, it binds directly to 16S rRNA central domain where it helps coordinate assembly of the platform of the 30S subunit.</text>
</comment>
<comment type="subunit">
    <text evidence="1">Part of the 30S ribosomal subunit. Contacts proteins S5 and S12.</text>
</comment>
<comment type="similarity">
    <text evidence="1">Belongs to the universal ribosomal protein uS8 family.</text>
</comment>
<gene>
    <name evidence="1" type="primary">rpsH</name>
    <name type="ordered locus">jhp_1225</name>
</gene>
<dbReference type="EMBL" id="AE001439">
    <property type="protein sequence ID" value="AAD06809.1"/>
    <property type="molecule type" value="Genomic_DNA"/>
</dbReference>
<dbReference type="RefSeq" id="WP_000245805.1">
    <property type="nucleotide sequence ID" value="NZ_CP011330.1"/>
</dbReference>
<dbReference type="SMR" id="P66622"/>
<dbReference type="GeneID" id="93237564"/>
<dbReference type="KEGG" id="hpj:jhp_1225"/>
<dbReference type="PATRIC" id="fig|85963.30.peg.1346"/>
<dbReference type="eggNOG" id="COG0096">
    <property type="taxonomic scope" value="Bacteria"/>
</dbReference>
<dbReference type="Proteomes" id="UP000000804">
    <property type="component" value="Chromosome"/>
</dbReference>
<dbReference type="GO" id="GO:1990904">
    <property type="term" value="C:ribonucleoprotein complex"/>
    <property type="evidence" value="ECO:0007669"/>
    <property type="project" value="UniProtKB-KW"/>
</dbReference>
<dbReference type="GO" id="GO:0005840">
    <property type="term" value="C:ribosome"/>
    <property type="evidence" value="ECO:0007669"/>
    <property type="project" value="UniProtKB-KW"/>
</dbReference>
<dbReference type="GO" id="GO:0019843">
    <property type="term" value="F:rRNA binding"/>
    <property type="evidence" value="ECO:0007669"/>
    <property type="project" value="UniProtKB-UniRule"/>
</dbReference>
<dbReference type="GO" id="GO:0003735">
    <property type="term" value="F:structural constituent of ribosome"/>
    <property type="evidence" value="ECO:0007669"/>
    <property type="project" value="InterPro"/>
</dbReference>
<dbReference type="GO" id="GO:0006412">
    <property type="term" value="P:translation"/>
    <property type="evidence" value="ECO:0007669"/>
    <property type="project" value="UniProtKB-UniRule"/>
</dbReference>
<dbReference type="FunFam" id="3.30.1370.30:FF:000002">
    <property type="entry name" value="30S ribosomal protein S8"/>
    <property type="match status" value="1"/>
</dbReference>
<dbReference type="FunFam" id="3.30.1490.10:FF:000001">
    <property type="entry name" value="30S ribosomal protein S8"/>
    <property type="match status" value="1"/>
</dbReference>
<dbReference type="Gene3D" id="3.30.1370.30">
    <property type="match status" value="1"/>
</dbReference>
<dbReference type="Gene3D" id="3.30.1490.10">
    <property type="match status" value="1"/>
</dbReference>
<dbReference type="HAMAP" id="MF_01302_B">
    <property type="entry name" value="Ribosomal_uS8_B"/>
    <property type="match status" value="1"/>
</dbReference>
<dbReference type="InterPro" id="IPR000630">
    <property type="entry name" value="Ribosomal_uS8"/>
</dbReference>
<dbReference type="InterPro" id="IPR047863">
    <property type="entry name" value="Ribosomal_uS8_CS"/>
</dbReference>
<dbReference type="InterPro" id="IPR035987">
    <property type="entry name" value="Ribosomal_uS8_sf"/>
</dbReference>
<dbReference type="NCBIfam" id="NF001109">
    <property type="entry name" value="PRK00136.1"/>
    <property type="match status" value="1"/>
</dbReference>
<dbReference type="PANTHER" id="PTHR11758">
    <property type="entry name" value="40S RIBOSOMAL PROTEIN S15A"/>
    <property type="match status" value="1"/>
</dbReference>
<dbReference type="Pfam" id="PF00410">
    <property type="entry name" value="Ribosomal_S8"/>
    <property type="match status" value="1"/>
</dbReference>
<dbReference type="SUPFAM" id="SSF56047">
    <property type="entry name" value="Ribosomal protein S8"/>
    <property type="match status" value="1"/>
</dbReference>
<dbReference type="PROSITE" id="PS00053">
    <property type="entry name" value="RIBOSOMAL_S8"/>
    <property type="match status" value="1"/>
</dbReference>
<sequence>MVNDIIADSLTRLRNASMRRLEFTQLYYAKIVVSILEIFKEKGFIKDFNVKDKDKKQSVYVQLAYDEKGHSKISEVKRLSKPGRRVYKQKNELKRFKNGYGVIVVSTSKGVITNEEAYRQNVGGEVLCSIW</sequence>
<keyword id="KW-0687">Ribonucleoprotein</keyword>
<keyword id="KW-0689">Ribosomal protein</keyword>
<keyword id="KW-0694">RNA-binding</keyword>
<keyword id="KW-0699">rRNA-binding</keyword>
<evidence type="ECO:0000255" key="1">
    <source>
        <dbReference type="HAMAP-Rule" id="MF_01302"/>
    </source>
</evidence>
<evidence type="ECO:0000305" key="2"/>